<dbReference type="EC" id="3.1.2.6" evidence="1"/>
<dbReference type="EMBL" id="AE016795">
    <property type="protein sequence ID" value="AAO10285.1"/>
    <property type="molecule type" value="Genomic_DNA"/>
</dbReference>
<dbReference type="RefSeq" id="WP_011079785.1">
    <property type="nucleotide sequence ID" value="NC_004459.3"/>
</dbReference>
<dbReference type="SMR" id="Q8DBD8"/>
<dbReference type="GeneID" id="93896110"/>
<dbReference type="KEGG" id="vvu:VV1_1883"/>
<dbReference type="HOGENOM" id="CLU_030571_4_1_6"/>
<dbReference type="UniPathway" id="UPA00619">
    <property type="reaction ID" value="UER00676"/>
</dbReference>
<dbReference type="Proteomes" id="UP000002275">
    <property type="component" value="Chromosome 1"/>
</dbReference>
<dbReference type="GO" id="GO:0004416">
    <property type="term" value="F:hydroxyacylglutathione hydrolase activity"/>
    <property type="evidence" value="ECO:0007669"/>
    <property type="project" value="UniProtKB-UniRule"/>
</dbReference>
<dbReference type="GO" id="GO:0046872">
    <property type="term" value="F:metal ion binding"/>
    <property type="evidence" value="ECO:0007669"/>
    <property type="project" value="UniProtKB-KW"/>
</dbReference>
<dbReference type="GO" id="GO:0019243">
    <property type="term" value="P:methylglyoxal catabolic process to D-lactate via S-lactoyl-glutathione"/>
    <property type="evidence" value="ECO:0007669"/>
    <property type="project" value="InterPro"/>
</dbReference>
<dbReference type="CDD" id="cd07723">
    <property type="entry name" value="hydroxyacylglutathione_hydrolase_MBL-fold"/>
    <property type="match status" value="1"/>
</dbReference>
<dbReference type="Gene3D" id="3.60.15.10">
    <property type="entry name" value="Ribonuclease Z/Hydroxyacylglutathione hydrolase-like"/>
    <property type="match status" value="1"/>
</dbReference>
<dbReference type="HAMAP" id="MF_01374">
    <property type="entry name" value="Glyoxalase_2"/>
    <property type="match status" value="1"/>
</dbReference>
<dbReference type="InterPro" id="IPR035680">
    <property type="entry name" value="Clx_II_MBL"/>
</dbReference>
<dbReference type="InterPro" id="IPR050110">
    <property type="entry name" value="Glyoxalase_II_hydrolase"/>
</dbReference>
<dbReference type="InterPro" id="IPR032282">
    <property type="entry name" value="HAGH_C"/>
</dbReference>
<dbReference type="InterPro" id="IPR017782">
    <property type="entry name" value="Hydroxyacylglutathione_Hdrlase"/>
</dbReference>
<dbReference type="InterPro" id="IPR001279">
    <property type="entry name" value="Metallo-B-lactamas"/>
</dbReference>
<dbReference type="InterPro" id="IPR036866">
    <property type="entry name" value="RibonucZ/Hydroxyglut_hydro"/>
</dbReference>
<dbReference type="NCBIfam" id="TIGR03413">
    <property type="entry name" value="GSH_gloB"/>
    <property type="match status" value="1"/>
</dbReference>
<dbReference type="PANTHER" id="PTHR43705">
    <property type="entry name" value="HYDROXYACYLGLUTATHIONE HYDROLASE"/>
    <property type="match status" value="1"/>
</dbReference>
<dbReference type="PANTHER" id="PTHR43705:SF1">
    <property type="entry name" value="HYDROXYACYLGLUTATHIONE HYDROLASE GLOB"/>
    <property type="match status" value="1"/>
</dbReference>
<dbReference type="Pfam" id="PF16123">
    <property type="entry name" value="HAGH_C"/>
    <property type="match status" value="1"/>
</dbReference>
<dbReference type="Pfam" id="PF00753">
    <property type="entry name" value="Lactamase_B"/>
    <property type="match status" value="1"/>
</dbReference>
<dbReference type="PIRSF" id="PIRSF005457">
    <property type="entry name" value="Glx"/>
    <property type="match status" value="1"/>
</dbReference>
<dbReference type="SMART" id="SM00849">
    <property type="entry name" value="Lactamase_B"/>
    <property type="match status" value="1"/>
</dbReference>
<dbReference type="SUPFAM" id="SSF56281">
    <property type="entry name" value="Metallo-hydrolase/oxidoreductase"/>
    <property type="match status" value="1"/>
</dbReference>
<keyword id="KW-0378">Hydrolase</keyword>
<keyword id="KW-0479">Metal-binding</keyword>
<keyword id="KW-0862">Zinc</keyword>
<protein>
    <recommendedName>
        <fullName evidence="1">Hydroxyacylglutathione hydrolase</fullName>
        <ecNumber evidence="1">3.1.2.6</ecNumber>
    </recommendedName>
    <alternativeName>
        <fullName evidence="1">Glyoxalase II</fullName>
        <shortName evidence="1">Glx II</shortName>
    </alternativeName>
</protein>
<reference key="1">
    <citation type="submission" date="2002-12" db="EMBL/GenBank/DDBJ databases">
        <title>Complete genome sequence of Vibrio vulnificus CMCP6.</title>
        <authorList>
            <person name="Rhee J.H."/>
            <person name="Kim S.Y."/>
            <person name="Chung S.S."/>
            <person name="Kim J.J."/>
            <person name="Moon Y.H."/>
            <person name="Jeong H."/>
            <person name="Choy H.E."/>
        </authorList>
    </citation>
    <scope>NUCLEOTIDE SEQUENCE [LARGE SCALE GENOMIC DNA]</scope>
    <source>
        <strain>CMCP6</strain>
    </source>
</reference>
<gene>
    <name evidence="1" type="primary">gloB</name>
    <name type="ordered locus">VV1_1883</name>
</gene>
<evidence type="ECO:0000255" key="1">
    <source>
        <dbReference type="HAMAP-Rule" id="MF_01374"/>
    </source>
</evidence>
<proteinExistence type="inferred from homology"/>
<feature type="chain" id="PRO_0000309722" description="Hydroxyacylglutathione hydrolase">
    <location>
        <begin position="1"/>
        <end position="252"/>
    </location>
</feature>
<feature type="binding site" evidence="1">
    <location>
        <position position="54"/>
    </location>
    <ligand>
        <name>Zn(2+)</name>
        <dbReference type="ChEBI" id="CHEBI:29105"/>
        <label>1</label>
    </ligand>
</feature>
<feature type="binding site" evidence="1">
    <location>
        <position position="56"/>
    </location>
    <ligand>
        <name>Zn(2+)</name>
        <dbReference type="ChEBI" id="CHEBI:29105"/>
        <label>1</label>
    </ligand>
</feature>
<feature type="binding site" evidence="1">
    <location>
        <position position="58"/>
    </location>
    <ligand>
        <name>Zn(2+)</name>
        <dbReference type="ChEBI" id="CHEBI:29105"/>
        <label>2</label>
    </ligand>
</feature>
<feature type="binding site" evidence="1">
    <location>
        <position position="59"/>
    </location>
    <ligand>
        <name>Zn(2+)</name>
        <dbReference type="ChEBI" id="CHEBI:29105"/>
        <label>2</label>
    </ligand>
</feature>
<feature type="binding site" evidence="1">
    <location>
        <position position="111"/>
    </location>
    <ligand>
        <name>Zn(2+)</name>
        <dbReference type="ChEBI" id="CHEBI:29105"/>
        <label>1</label>
    </ligand>
</feature>
<feature type="binding site" evidence="1">
    <location>
        <position position="128"/>
    </location>
    <ligand>
        <name>Zn(2+)</name>
        <dbReference type="ChEBI" id="CHEBI:29105"/>
        <label>1</label>
    </ligand>
</feature>
<feature type="binding site" evidence="1">
    <location>
        <position position="128"/>
    </location>
    <ligand>
        <name>Zn(2+)</name>
        <dbReference type="ChEBI" id="CHEBI:29105"/>
        <label>2</label>
    </ligand>
</feature>
<feature type="binding site" evidence="1">
    <location>
        <position position="166"/>
    </location>
    <ligand>
        <name>Zn(2+)</name>
        <dbReference type="ChEBI" id="CHEBI:29105"/>
        <label>2</label>
    </ligand>
</feature>
<accession>Q8DBD8</accession>
<organism>
    <name type="scientific">Vibrio vulnificus (strain CMCP6)</name>
    <dbReference type="NCBI Taxonomy" id="216895"/>
    <lineage>
        <taxon>Bacteria</taxon>
        <taxon>Pseudomonadati</taxon>
        <taxon>Pseudomonadota</taxon>
        <taxon>Gammaproteobacteria</taxon>
        <taxon>Vibrionales</taxon>
        <taxon>Vibrionaceae</taxon>
        <taxon>Vibrio</taxon>
    </lineage>
</organism>
<name>GLO2_VIBVU</name>
<comment type="function">
    <text evidence="1">Thiolesterase that catalyzes the hydrolysis of S-D-lactoyl-glutathione to form glutathione and D-lactic acid.</text>
</comment>
<comment type="catalytic activity">
    <reaction evidence="1">
        <text>an S-(2-hydroxyacyl)glutathione + H2O = a 2-hydroxy carboxylate + glutathione + H(+)</text>
        <dbReference type="Rhea" id="RHEA:21864"/>
        <dbReference type="ChEBI" id="CHEBI:15377"/>
        <dbReference type="ChEBI" id="CHEBI:15378"/>
        <dbReference type="ChEBI" id="CHEBI:57925"/>
        <dbReference type="ChEBI" id="CHEBI:58896"/>
        <dbReference type="ChEBI" id="CHEBI:71261"/>
        <dbReference type="EC" id="3.1.2.6"/>
    </reaction>
</comment>
<comment type="cofactor">
    <cofactor evidence="1">
        <name>Zn(2+)</name>
        <dbReference type="ChEBI" id="CHEBI:29105"/>
    </cofactor>
    <text evidence="1">Binds 2 Zn(2+) ions per subunit.</text>
</comment>
<comment type="pathway">
    <text evidence="1">Secondary metabolite metabolism; methylglyoxal degradation; (R)-lactate from methylglyoxal: step 2/2.</text>
</comment>
<comment type="subunit">
    <text evidence="1">Monomer.</text>
</comment>
<comment type="similarity">
    <text evidence="1">Belongs to the metallo-beta-lactamase superfamily. Glyoxalase II family.</text>
</comment>
<sequence length="252" mass="28248">MLEIKSIPAFNDNYIWLIQNSDQRCAVVDPGDAKPVLHYIEQHQLTLEAILITHHHNDHIGGVADLVRAFPNVNVVGPKAEPIPTLTHPVEDGDRLELFDETFLVLGLGGHTLGHIGYVGDGKLFCGDVLFSAGCGRIFEGTAQQMFDSLNKLLALPEETEVFCAHEYTASNVAFALAVEPDNELLHQYRDTVNRLRAQNLPTIPTTLRQEKWINPFLRYLQPSVIHSVSSRTKNSDPLSVFTALREWKNEF</sequence>